<keyword id="KW-0929">Antimicrobial</keyword>
<keyword id="KW-0081">Bacteriolytic enzyme</keyword>
<keyword id="KW-0131">Cell cycle</keyword>
<keyword id="KW-0132">Cell division</keyword>
<keyword id="KW-0961">Cell wall biogenesis/degradation</keyword>
<keyword id="KW-0378">Hydrolase</keyword>
<keyword id="KW-0677">Repeat</keyword>
<keyword id="KW-0964">Secreted</keyword>
<keyword id="KW-0717">Septation</keyword>
<keyword id="KW-0732">Signal</keyword>
<keyword id="KW-0843">Virulence</keyword>
<name>SLE1_STAHJ</name>
<organism>
    <name type="scientific">Staphylococcus haemolyticus (strain JCSC1435)</name>
    <dbReference type="NCBI Taxonomy" id="279808"/>
    <lineage>
        <taxon>Bacteria</taxon>
        <taxon>Bacillati</taxon>
        <taxon>Bacillota</taxon>
        <taxon>Bacilli</taxon>
        <taxon>Bacillales</taxon>
        <taxon>Staphylococcaceae</taxon>
        <taxon>Staphylococcus</taxon>
    </lineage>
</organism>
<reference key="1">
    <citation type="journal article" date="2005" name="J. Bacteriol.">
        <title>Whole-genome sequencing of Staphylococcus haemolyticus uncovers the extreme plasticity of its genome and the evolution of human-colonizing staphylococcal species.</title>
        <authorList>
            <person name="Takeuchi F."/>
            <person name="Watanabe S."/>
            <person name="Baba T."/>
            <person name="Yuzawa H."/>
            <person name="Ito T."/>
            <person name="Morimoto Y."/>
            <person name="Kuroda M."/>
            <person name="Cui L."/>
            <person name="Takahashi M."/>
            <person name="Ankai A."/>
            <person name="Baba S."/>
            <person name="Fukui S."/>
            <person name="Lee J.C."/>
            <person name="Hiramatsu K."/>
        </authorList>
    </citation>
    <scope>NUCLEOTIDE SEQUENCE [LARGE SCALE GENOMIC DNA]</scope>
    <source>
        <strain>JCSC1435</strain>
    </source>
</reference>
<protein>
    <recommendedName>
        <fullName>N-acetylmuramoyl-L-alanine amidase sle1</fullName>
        <ecNumber>3.5.1.28</ecNumber>
    </recommendedName>
</protein>
<gene>
    <name type="primary">sle1</name>
    <name type="synonym">aaa</name>
    <name type="ordered locus">SH2547</name>
</gene>
<evidence type="ECO:0000250" key="1"/>
<evidence type="ECO:0000255" key="2"/>
<evidence type="ECO:0000255" key="3">
    <source>
        <dbReference type="PROSITE-ProRule" id="PRU00048"/>
    </source>
</evidence>
<evidence type="ECO:0000255" key="4">
    <source>
        <dbReference type="PROSITE-ProRule" id="PRU01118"/>
    </source>
</evidence>
<sequence>MNKKILATAVLGTGALSTLFAHQAEASTTHTVRSGESLWSISHHYGITVSKLKSLNGLSSNLIFPNQVLKVSGSSNYSSRSNYGNSSSTYTVRAGDSLSSIASRYGTTYRHIMNLNGLNSFLIFPGQQLKVSGSVSSNSHSSYNSNSGGSSSTYTVRYGDSLSSIASRYGTTYQHIMRLNGLNNFFIYPGQKLRVSGSASSNTYSTRSAQSTYYSSPVFNHRNLYDWGQCTWHVFNRRAAIGKGISTYWWNANNWDNAAARDGYRIDGNPTVGSIAQSDAGYYGHVAFVERVNSNGSILVSEMNFSASPGILTYRTIPAYQVRNYKFIH</sequence>
<proteinExistence type="inferred from homology"/>
<feature type="signal peptide" evidence="2">
    <location>
        <begin position="1"/>
        <end position="26"/>
    </location>
</feature>
<feature type="chain" id="PRO_0000231629" description="N-acetylmuramoyl-L-alanine amidase sle1">
    <location>
        <begin position="27"/>
        <end position="329"/>
    </location>
</feature>
<feature type="domain" description="LysM 1" evidence="4">
    <location>
        <begin position="28"/>
        <end position="71"/>
    </location>
</feature>
<feature type="domain" description="LysM 2" evidence="4">
    <location>
        <begin position="88"/>
        <end position="131"/>
    </location>
</feature>
<feature type="domain" description="LysM 3" evidence="4">
    <location>
        <begin position="152"/>
        <end position="195"/>
    </location>
</feature>
<feature type="domain" description="Peptidase C51" evidence="3">
    <location>
        <begin position="205"/>
        <end position="329"/>
    </location>
</feature>
<dbReference type="EC" id="3.5.1.28"/>
<dbReference type="EMBL" id="AP006716">
    <property type="protein sequence ID" value="BAE05856.1"/>
    <property type="molecule type" value="Genomic_DNA"/>
</dbReference>
<dbReference type="RefSeq" id="WP_011276796.1">
    <property type="nucleotide sequence ID" value="NC_007168.1"/>
</dbReference>
<dbReference type="SMR" id="Q4L3C1"/>
<dbReference type="CAZy" id="CBM50">
    <property type="family name" value="Carbohydrate-Binding Module Family 50"/>
</dbReference>
<dbReference type="KEGG" id="sha:SH2547"/>
<dbReference type="eggNOG" id="COG1388">
    <property type="taxonomic scope" value="Bacteria"/>
</dbReference>
<dbReference type="eggNOG" id="COG3942">
    <property type="taxonomic scope" value="Bacteria"/>
</dbReference>
<dbReference type="HOGENOM" id="CLU_016043_1_3_9"/>
<dbReference type="OrthoDB" id="9813368at2"/>
<dbReference type="Proteomes" id="UP000000543">
    <property type="component" value="Chromosome"/>
</dbReference>
<dbReference type="GO" id="GO:0009986">
    <property type="term" value="C:cell surface"/>
    <property type="evidence" value="ECO:0007669"/>
    <property type="project" value="UniProtKB-SubCell"/>
</dbReference>
<dbReference type="GO" id="GO:0005576">
    <property type="term" value="C:extracellular region"/>
    <property type="evidence" value="ECO:0007669"/>
    <property type="project" value="UniProtKB-SubCell"/>
</dbReference>
<dbReference type="GO" id="GO:0008932">
    <property type="term" value="F:lytic endotransglycosylase activity"/>
    <property type="evidence" value="ECO:0007669"/>
    <property type="project" value="TreeGrafter"/>
</dbReference>
<dbReference type="GO" id="GO:0008745">
    <property type="term" value="F:N-acetylmuramoyl-L-alanine amidase activity"/>
    <property type="evidence" value="ECO:0007669"/>
    <property type="project" value="UniProtKB-EC"/>
</dbReference>
<dbReference type="GO" id="GO:0071555">
    <property type="term" value="P:cell wall organization"/>
    <property type="evidence" value="ECO:0007669"/>
    <property type="project" value="UniProtKB-KW"/>
</dbReference>
<dbReference type="GO" id="GO:0042742">
    <property type="term" value="P:defense response to bacterium"/>
    <property type="evidence" value="ECO:0007669"/>
    <property type="project" value="UniProtKB-KW"/>
</dbReference>
<dbReference type="GO" id="GO:0000917">
    <property type="term" value="P:division septum assembly"/>
    <property type="evidence" value="ECO:0007669"/>
    <property type="project" value="UniProtKB-KW"/>
</dbReference>
<dbReference type="GO" id="GO:0031640">
    <property type="term" value="P:killing of cells of another organism"/>
    <property type="evidence" value="ECO:0007669"/>
    <property type="project" value="UniProtKB-KW"/>
</dbReference>
<dbReference type="CDD" id="cd00118">
    <property type="entry name" value="LysM"/>
    <property type="match status" value="3"/>
</dbReference>
<dbReference type="Gene3D" id="3.90.1720.10">
    <property type="entry name" value="endopeptidase domain like (from Nostoc punctiforme)"/>
    <property type="match status" value="1"/>
</dbReference>
<dbReference type="Gene3D" id="3.10.350.10">
    <property type="entry name" value="LysM domain"/>
    <property type="match status" value="3"/>
</dbReference>
<dbReference type="InterPro" id="IPR007921">
    <property type="entry name" value="CHAP_dom"/>
</dbReference>
<dbReference type="InterPro" id="IPR018392">
    <property type="entry name" value="LysM_dom"/>
</dbReference>
<dbReference type="InterPro" id="IPR036779">
    <property type="entry name" value="LysM_dom_sf"/>
</dbReference>
<dbReference type="InterPro" id="IPR038765">
    <property type="entry name" value="Papain-like_cys_pep_sf"/>
</dbReference>
<dbReference type="PANTHER" id="PTHR33734">
    <property type="entry name" value="LYSM DOMAIN-CONTAINING GPI-ANCHORED PROTEIN 2"/>
    <property type="match status" value="1"/>
</dbReference>
<dbReference type="PANTHER" id="PTHR33734:SF22">
    <property type="entry name" value="MEMBRANE-BOUND LYTIC MUREIN TRANSGLYCOSYLASE D"/>
    <property type="match status" value="1"/>
</dbReference>
<dbReference type="Pfam" id="PF05257">
    <property type="entry name" value="CHAP"/>
    <property type="match status" value="1"/>
</dbReference>
<dbReference type="Pfam" id="PF01476">
    <property type="entry name" value="LysM"/>
    <property type="match status" value="3"/>
</dbReference>
<dbReference type="SMART" id="SM00257">
    <property type="entry name" value="LysM"/>
    <property type="match status" value="3"/>
</dbReference>
<dbReference type="SUPFAM" id="SSF54001">
    <property type="entry name" value="Cysteine proteinases"/>
    <property type="match status" value="1"/>
</dbReference>
<dbReference type="SUPFAM" id="SSF54106">
    <property type="entry name" value="LysM domain"/>
    <property type="match status" value="3"/>
</dbReference>
<dbReference type="PROSITE" id="PS50911">
    <property type="entry name" value="CHAP"/>
    <property type="match status" value="1"/>
</dbReference>
<dbReference type="PROSITE" id="PS51782">
    <property type="entry name" value="LYSM"/>
    <property type="match status" value="3"/>
</dbReference>
<comment type="function">
    <text evidence="1">Peptidoglycan hydrolase involved in the splitting of the septum during cell division.</text>
</comment>
<comment type="catalytic activity">
    <reaction>
        <text>Hydrolyzes the link between N-acetylmuramoyl residues and L-amino acid residues in certain cell-wall glycopeptides.</text>
        <dbReference type="EC" id="3.5.1.28"/>
    </reaction>
</comment>
<comment type="subcellular location">
    <subcellularLocation>
        <location evidence="1">Secreted</location>
    </subcellularLocation>
    <subcellularLocation>
        <location evidence="1">Cell surface</location>
    </subcellularLocation>
</comment>
<accession>Q4L3C1</accession>